<accession>Q6GFR5</accession>
<gene>
    <name evidence="1" type="primary">pckA</name>
    <name type="ordered locus">SAR1871</name>
</gene>
<name>PCKA_STAAR</name>
<sequence>MSVDTYTETTKIDKLLKKPTSHFQLSTTQLYNKILDNNEGVLTELGAVNASTGKYTGRSPKDKFFVSEPSYRDNIDWGEINQPIDEETFLKLYHKVLDYLDKKDELYVFKGYAGSDKDTMLKLTVINELAWHNLFAKNMFIRPESKEEATKIKPNFTIVSAPHFKADPEVDGTKSETFVIISFKHKVILIGGTEYAGEMKKGIFSVMNYLLPMQDIMSMHCSANVGEKGDVALFFGLSGTGKTTLSADPHRKLIGDDEHGWNKNGVFNIEGGCYAKAINLSKEKEPQIFDAIKYGAILENTVVAEDGSVDFEDNRYTENTRAAYPINHIDNIVVPSKAAHPNTIIFLTADAFGVIPPISKLNKDQAMYHFLSGFTSKLAGTERGVTEPEPSFSTCFGAPFFPLHPTVYADLLGELIDLHDVDVYLVNTGWTGGKYGVGRRISLHYTRQMVNQAISGKLKNAEYTKDSTFGLSIPVEIEDVPKTILNPINAWSDKEKYKTQAEDLIQRFEKNFEKFGEKVEHIAEKGSFNK</sequence>
<dbReference type="EC" id="4.1.1.49" evidence="1"/>
<dbReference type="EMBL" id="BX571856">
    <property type="protein sequence ID" value="CAG40862.1"/>
    <property type="molecule type" value="Genomic_DNA"/>
</dbReference>
<dbReference type="RefSeq" id="WP_000109909.1">
    <property type="nucleotide sequence ID" value="NC_002952.2"/>
</dbReference>
<dbReference type="SMR" id="Q6GFR5"/>
<dbReference type="KEGG" id="sar:SAR1871"/>
<dbReference type="HOGENOM" id="CLU_018247_0_1_9"/>
<dbReference type="UniPathway" id="UPA00138"/>
<dbReference type="Proteomes" id="UP000000596">
    <property type="component" value="Chromosome"/>
</dbReference>
<dbReference type="GO" id="GO:0005829">
    <property type="term" value="C:cytosol"/>
    <property type="evidence" value="ECO:0007669"/>
    <property type="project" value="TreeGrafter"/>
</dbReference>
<dbReference type="GO" id="GO:0005524">
    <property type="term" value="F:ATP binding"/>
    <property type="evidence" value="ECO:0007669"/>
    <property type="project" value="UniProtKB-UniRule"/>
</dbReference>
<dbReference type="GO" id="GO:0046872">
    <property type="term" value="F:metal ion binding"/>
    <property type="evidence" value="ECO:0007669"/>
    <property type="project" value="UniProtKB-KW"/>
</dbReference>
<dbReference type="GO" id="GO:0004612">
    <property type="term" value="F:phosphoenolpyruvate carboxykinase (ATP) activity"/>
    <property type="evidence" value="ECO:0007669"/>
    <property type="project" value="UniProtKB-UniRule"/>
</dbReference>
<dbReference type="GO" id="GO:0006094">
    <property type="term" value="P:gluconeogenesis"/>
    <property type="evidence" value="ECO:0007669"/>
    <property type="project" value="UniProtKB-UniRule"/>
</dbReference>
<dbReference type="CDD" id="cd00484">
    <property type="entry name" value="PEPCK_ATP"/>
    <property type="match status" value="1"/>
</dbReference>
<dbReference type="FunFam" id="2.170.8.10:FF:000001">
    <property type="entry name" value="Phosphoenolpyruvate carboxykinase (ATP)"/>
    <property type="match status" value="1"/>
</dbReference>
<dbReference type="FunFam" id="3.40.449.10:FF:000001">
    <property type="entry name" value="Phosphoenolpyruvate carboxykinase (ATP)"/>
    <property type="match status" value="1"/>
</dbReference>
<dbReference type="Gene3D" id="3.90.228.20">
    <property type="match status" value="1"/>
</dbReference>
<dbReference type="Gene3D" id="3.40.449.10">
    <property type="entry name" value="Phosphoenolpyruvate Carboxykinase, domain 1"/>
    <property type="match status" value="1"/>
</dbReference>
<dbReference type="Gene3D" id="2.170.8.10">
    <property type="entry name" value="Phosphoenolpyruvate Carboxykinase, domain 2"/>
    <property type="match status" value="1"/>
</dbReference>
<dbReference type="HAMAP" id="MF_00453">
    <property type="entry name" value="PEPCK_ATP"/>
    <property type="match status" value="1"/>
</dbReference>
<dbReference type="InterPro" id="IPR001272">
    <property type="entry name" value="PEP_carboxykinase_ATP"/>
</dbReference>
<dbReference type="InterPro" id="IPR013035">
    <property type="entry name" value="PEP_carboxykinase_C"/>
</dbReference>
<dbReference type="InterPro" id="IPR008210">
    <property type="entry name" value="PEP_carboxykinase_N"/>
</dbReference>
<dbReference type="InterPro" id="IPR015994">
    <property type="entry name" value="PEPCK_ATP_CS"/>
</dbReference>
<dbReference type="NCBIfam" id="TIGR00224">
    <property type="entry name" value="pckA"/>
    <property type="match status" value="1"/>
</dbReference>
<dbReference type="NCBIfam" id="NF006820">
    <property type="entry name" value="PRK09344.1-2"/>
    <property type="match status" value="1"/>
</dbReference>
<dbReference type="NCBIfam" id="NF006821">
    <property type="entry name" value="PRK09344.1-3"/>
    <property type="match status" value="1"/>
</dbReference>
<dbReference type="PANTHER" id="PTHR30031:SF0">
    <property type="entry name" value="PHOSPHOENOLPYRUVATE CARBOXYKINASE (ATP)"/>
    <property type="match status" value="1"/>
</dbReference>
<dbReference type="PANTHER" id="PTHR30031">
    <property type="entry name" value="PHOSPHOENOLPYRUVATE CARBOXYKINASE ATP"/>
    <property type="match status" value="1"/>
</dbReference>
<dbReference type="Pfam" id="PF01293">
    <property type="entry name" value="PEPCK_ATP"/>
    <property type="match status" value="1"/>
</dbReference>
<dbReference type="PIRSF" id="PIRSF006294">
    <property type="entry name" value="PEP_crbxkin"/>
    <property type="match status" value="1"/>
</dbReference>
<dbReference type="SUPFAM" id="SSF68923">
    <property type="entry name" value="PEP carboxykinase N-terminal domain"/>
    <property type="match status" value="1"/>
</dbReference>
<dbReference type="SUPFAM" id="SSF53795">
    <property type="entry name" value="PEP carboxykinase-like"/>
    <property type="match status" value="1"/>
</dbReference>
<dbReference type="PROSITE" id="PS00532">
    <property type="entry name" value="PEPCK_ATP"/>
    <property type="match status" value="1"/>
</dbReference>
<proteinExistence type="inferred from homology"/>
<organism>
    <name type="scientific">Staphylococcus aureus (strain MRSA252)</name>
    <dbReference type="NCBI Taxonomy" id="282458"/>
    <lineage>
        <taxon>Bacteria</taxon>
        <taxon>Bacillati</taxon>
        <taxon>Bacillota</taxon>
        <taxon>Bacilli</taxon>
        <taxon>Bacillales</taxon>
        <taxon>Staphylococcaceae</taxon>
        <taxon>Staphylococcus</taxon>
    </lineage>
</organism>
<evidence type="ECO:0000255" key="1">
    <source>
        <dbReference type="HAMAP-Rule" id="MF_00453"/>
    </source>
</evidence>
<comment type="function">
    <text evidence="1">Involved in the gluconeogenesis. Catalyzes the conversion of oxaloacetate (OAA) to phosphoenolpyruvate (PEP) through direct phosphoryl transfer between the nucleoside triphosphate and OAA.</text>
</comment>
<comment type="catalytic activity">
    <reaction evidence="1">
        <text>oxaloacetate + ATP = phosphoenolpyruvate + ADP + CO2</text>
        <dbReference type="Rhea" id="RHEA:18617"/>
        <dbReference type="ChEBI" id="CHEBI:16452"/>
        <dbReference type="ChEBI" id="CHEBI:16526"/>
        <dbReference type="ChEBI" id="CHEBI:30616"/>
        <dbReference type="ChEBI" id="CHEBI:58702"/>
        <dbReference type="ChEBI" id="CHEBI:456216"/>
        <dbReference type="EC" id="4.1.1.49"/>
    </reaction>
</comment>
<comment type="cofactor">
    <cofactor evidence="1">
        <name>Mn(2+)</name>
        <dbReference type="ChEBI" id="CHEBI:29035"/>
    </cofactor>
    <text evidence="1">Binds 1 Mn(2+) ion per subunit.</text>
</comment>
<comment type="pathway">
    <text evidence="1">Carbohydrate biosynthesis; gluconeogenesis.</text>
</comment>
<comment type="subcellular location">
    <subcellularLocation>
        <location evidence="1">Cytoplasm</location>
    </subcellularLocation>
</comment>
<comment type="similarity">
    <text evidence="1">Belongs to the phosphoenolpyruvate carboxykinase (ATP) family.</text>
</comment>
<protein>
    <recommendedName>
        <fullName evidence="1">Phosphoenolpyruvate carboxykinase (ATP)</fullName>
        <shortName evidence="1">PCK</shortName>
        <shortName evidence="1">PEP carboxykinase</shortName>
        <shortName evidence="1">PEPCK</shortName>
        <ecNumber evidence="1">4.1.1.49</ecNumber>
    </recommendedName>
</protein>
<feature type="chain" id="PRO_0000203846" description="Phosphoenolpyruvate carboxykinase (ATP)">
    <location>
        <begin position="1"/>
        <end position="530"/>
    </location>
</feature>
<feature type="binding site" evidence="1">
    <location>
        <position position="58"/>
    </location>
    <ligand>
        <name>substrate</name>
    </ligand>
</feature>
<feature type="binding site" evidence="1">
    <location>
        <position position="195"/>
    </location>
    <ligand>
        <name>substrate</name>
    </ligand>
</feature>
<feature type="binding site" evidence="1">
    <location>
        <position position="201"/>
    </location>
    <ligand>
        <name>ATP</name>
        <dbReference type="ChEBI" id="CHEBI:30616"/>
    </ligand>
</feature>
<feature type="binding site" evidence="1">
    <location>
        <position position="201"/>
    </location>
    <ligand>
        <name>Mn(2+)</name>
        <dbReference type="ChEBI" id="CHEBI:29035"/>
    </ligand>
</feature>
<feature type="binding site" evidence="1">
    <location>
        <position position="201"/>
    </location>
    <ligand>
        <name>substrate</name>
    </ligand>
</feature>
<feature type="binding site" evidence="1">
    <location>
        <position position="220"/>
    </location>
    <ligand>
        <name>ATP</name>
        <dbReference type="ChEBI" id="CHEBI:30616"/>
    </ligand>
</feature>
<feature type="binding site" evidence="1">
    <location>
        <position position="220"/>
    </location>
    <ligand>
        <name>Mn(2+)</name>
        <dbReference type="ChEBI" id="CHEBI:29035"/>
    </ligand>
</feature>
<feature type="binding site" evidence="1">
    <location>
        <begin position="236"/>
        <end position="244"/>
    </location>
    <ligand>
        <name>ATP</name>
        <dbReference type="ChEBI" id="CHEBI:30616"/>
    </ligand>
</feature>
<feature type="binding site" evidence="1">
    <location>
        <position position="257"/>
    </location>
    <ligand>
        <name>Mn(2+)</name>
        <dbReference type="ChEBI" id="CHEBI:29035"/>
    </ligand>
</feature>
<feature type="binding site" evidence="1">
    <location>
        <position position="285"/>
    </location>
    <ligand>
        <name>ATP</name>
        <dbReference type="ChEBI" id="CHEBI:30616"/>
    </ligand>
</feature>
<feature type="binding site" evidence="1">
    <location>
        <position position="321"/>
    </location>
    <ligand>
        <name>ATP</name>
        <dbReference type="ChEBI" id="CHEBI:30616"/>
    </ligand>
</feature>
<feature type="binding site" evidence="1">
    <location>
        <position position="321"/>
    </location>
    <ligand>
        <name>substrate</name>
    </ligand>
</feature>
<feature type="binding site" evidence="1">
    <location>
        <begin position="440"/>
        <end position="441"/>
    </location>
    <ligand>
        <name>ATP</name>
        <dbReference type="ChEBI" id="CHEBI:30616"/>
    </ligand>
</feature>
<feature type="binding site" evidence="1">
    <location>
        <position position="446"/>
    </location>
    <ligand>
        <name>ATP</name>
        <dbReference type="ChEBI" id="CHEBI:30616"/>
    </ligand>
</feature>
<keyword id="KW-0067">ATP-binding</keyword>
<keyword id="KW-0963">Cytoplasm</keyword>
<keyword id="KW-0210">Decarboxylase</keyword>
<keyword id="KW-0312">Gluconeogenesis</keyword>
<keyword id="KW-0456">Lyase</keyword>
<keyword id="KW-0464">Manganese</keyword>
<keyword id="KW-0479">Metal-binding</keyword>
<keyword id="KW-0547">Nucleotide-binding</keyword>
<reference key="1">
    <citation type="journal article" date="2004" name="Proc. Natl. Acad. Sci. U.S.A.">
        <title>Complete genomes of two clinical Staphylococcus aureus strains: evidence for the rapid evolution of virulence and drug resistance.</title>
        <authorList>
            <person name="Holden M.T.G."/>
            <person name="Feil E.J."/>
            <person name="Lindsay J.A."/>
            <person name="Peacock S.J."/>
            <person name="Day N.P.J."/>
            <person name="Enright M.C."/>
            <person name="Foster T.J."/>
            <person name="Moore C.E."/>
            <person name="Hurst L."/>
            <person name="Atkin R."/>
            <person name="Barron A."/>
            <person name="Bason N."/>
            <person name="Bentley S.D."/>
            <person name="Chillingworth C."/>
            <person name="Chillingworth T."/>
            <person name="Churcher C."/>
            <person name="Clark L."/>
            <person name="Corton C."/>
            <person name="Cronin A."/>
            <person name="Doggett J."/>
            <person name="Dowd L."/>
            <person name="Feltwell T."/>
            <person name="Hance Z."/>
            <person name="Harris B."/>
            <person name="Hauser H."/>
            <person name="Holroyd S."/>
            <person name="Jagels K."/>
            <person name="James K.D."/>
            <person name="Lennard N."/>
            <person name="Line A."/>
            <person name="Mayes R."/>
            <person name="Moule S."/>
            <person name="Mungall K."/>
            <person name="Ormond D."/>
            <person name="Quail M.A."/>
            <person name="Rabbinowitsch E."/>
            <person name="Rutherford K.M."/>
            <person name="Sanders M."/>
            <person name="Sharp S."/>
            <person name="Simmonds M."/>
            <person name="Stevens K."/>
            <person name="Whitehead S."/>
            <person name="Barrell B.G."/>
            <person name="Spratt B.G."/>
            <person name="Parkhill J."/>
        </authorList>
    </citation>
    <scope>NUCLEOTIDE SEQUENCE [LARGE SCALE GENOMIC DNA]</scope>
    <source>
        <strain>MRSA252</strain>
    </source>
</reference>